<feature type="chain" id="PRO_0000129848" description="Small ribosomal subunit protein uS19">
    <location>
        <begin position="1"/>
        <end position="91"/>
    </location>
</feature>
<keyword id="KW-0687">Ribonucleoprotein</keyword>
<keyword id="KW-0689">Ribosomal protein</keyword>
<keyword id="KW-0694">RNA-binding</keyword>
<keyword id="KW-0699">rRNA-binding</keyword>
<sequence length="91" mass="10259">MPRSLKKGPFLDLHLLKKVEKAVESGDKKPIKTWSRRSMIIPSMIGLTIAVHNGRQHVPVYVSDEMIGHKLGEFAPTRTYRGHAADKKAKK</sequence>
<organism>
    <name type="scientific">Mannheimia succiniciproducens (strain KCTC 0769BP / MBEL55E)</name>
    <dbReference type="NCBI Taxonomy" id="221988"/>
    <lineage>
        <taxon>Bacteria</taxon>
        <taxon>Pseudomonadati</taxon>
        <taxon>Pseudomonadota</taxon>
        <taxon>Gammaproteobacteria</taxon>
        <taxon>Pasteurellales</taxon>
        <taxon>Pasteurellaceae</taxon>
        <taxon>Basfia</taxon>
    </lineage>
</organism>
<name>RS19_MANSM</name>
<dbReference type="EMBL" id="AE016827">
    <property type="protein sequence ID" value="AAU38651.1"/>
    <property type="molecule type" value="Genomic_DNA"/>
</dbReference>
<dbReference type="RefSeq" id="WP_005539416.1">
    <property type="nucleotide sequence ID" value="NC_006300.1"/>
</dbReference>
<dbReference type="SMR" id="Q65QV9"/>
<dbReference type="STRING" id="221988.MS2044"/>
<dbReference type="GeneID" id="93298793"/>
<dbReference type="KEGG" id="msu:MS2044"/>
<dbReference type="eggNOG" id="COG0185">
    <property type="taxonomic scope" value="Bacteria"/>
</dbReference>
<dbReference type="HOGENOM" id="CLU_144911_0_1_6"/>
<dbReference type="OrthoDB" id="9797833at2"/>
<dbReference type="Proteomes" id="UP000000607">
    <property type="component" value="Chromosome"/>
</dbReference>
<dbReference type="GO" id="GO:0005737">
    <property type="term" value="C:cytoplasm"/>
    <property type="evidence" value="ECO:0007669"/>
    <property type="project" value="UniProtKB-ARBA"/>
</dbReference>
<dbReference type="GO" id="GO:0015935">
    <property type="term" value="C:small ribosomal subunit"/>
    <property type="evidence" value="ECO:0007669"/>
    <property type="project" value="InterPro"/>
</dbReference>
<dbReference type="GO" id="GO:0019843">
    <property type="term" value="F:rRNA binding"/>
    <property type="evidence" value="ECO:0007669"/>
    <property type="project" value="UniProtKB-UniRule"/>
</dbReference>
<dbReference type="GO" id="GO:0003735">
    <property type="term" value="F:structural constituent of ribosome"/>
    <property type="evidence" value="ECO:0007669"/>
    <property type="project" value="InterPro"/>
</dbReference>
<dbReference type="GO" id="GO:0000028">
    <property type="term" value="P:ribosomal small subunit assembly"/>
    <property type="evidence" value="ECO:0007669"/>
    <property type="project" value="TreeGrafter"/>
</dbReference>
<dbReference type="GO" id="GO:0006412">
    <property type="term" value="P:translation"/>
    <property type="evidence" value="ECO:0007669"/>
    <property type="project" value="UniProtKB-UniRule"/>
</dbReference>
<dbReference type="FunFam" id="3.30.860.10:FF:000001">
    <property type="entry name" value="30S ribosomal protein S19"/>
    <property type="match status" value="1"/>
</dbReference>
<dbReference type="Gene3D" id="3.30.860.10">
    <property type="entry name" value="30s Ribosomal Protein S19, Chain A"/>
    <property type="match status" value="1"/>
</dbReference>
<dbReference type="HAMAP" id="MF_00531">
    <property type="entry name" value="Ribosomal_uS19"/>
    <property type="match status" value="1"/>
</dbReference>
<dbReference type="InterPro" id="IPR002222">
    <property type="entry name" value="Ribosomal_uS19"/>
</dbReference>
<dbReference type="InterPro" id="IPR005732">
    <property type="entry name" value="Ribosomal_uS19_bac-type"/>
</dbReference>
<dbReference type="InterPro" id="IPR020934">
    <property type="entry name" value="Ribosomal_uS19_CS"/>
</dbReference>
<dbReference type="InterPro" id="IPR023575">
    <property type="entry name" value="Ribosomal_uS19_SF"/>
</dbReference>
<dbReference type="NCBIfam" id="TIGR01050">
    <property type="entry name" value="rpsS_bact"/>
    <property type="match status" value="1"/>
</dbReference>
<dbReference type="PANTHER" id="PTHR11880">
    <property type="entry name" value="RIBOSOMAL PROTEIN S19P FAMILY MEMBER"/>
    <property type="match status" value="1"/>
</dbReference>
<dbReference type="PANTHER" id="PTHR11880:SF8">
    <property type="entry name" value="SMALL RIBOSOMAL SUBUNIT PROTEIN US19M"/>
    <property type="match status" value="1"/>
</dbReference>
<dbReference type="Pfam" id="PF00203">
    <property type="entry name" value="Ribosomal_S19"/>
    <property type="match status" value="1"/>
</dbReference>
<dbReference type="PIRSF" id="PIRSF002144">
    <property type="entry name" value="Ribosomal_S19"/>
    <property type="match status" value="1"/>
</dbReference>
<dbReference type="PRINTS" id="PR00975">
    <property type="entry name" value="RIBOSOMALS19"/>
</dbReference>
<dbReference type="SUPFAM" id="SSF54570">
    <property type="entry name" value="Ribosomal protein S19"/>
    <property type="match status" value="1"/>
</dbReference>
<dbReference type="PROSITE" id="PS00323">
    <property type="entry name" value="RIBOSOMAL_S19"/>
    <property type="match status" value="1"/>
</dbReference>
<accession>Q65QV9</accession>
<protein>
    <recommendedName>
        <fullName evidence="1">Small ribosomal subunit protein uS19</fullName>
    </recommendedName>
    <alternativeName>
        <fullName evidence="2">30S ribosomal protein S19</fullName>
    </alternativeName>
</protein>
<proteinExistence type="inferred from homology"/>
<gene>
    <name evidence="1" type="primary">rpsS</name>
    <name type="ordered locus">MS2044</name>
</gene>
<comment type="function">
    <text evidence="1">Protein S19 forms a complex with S13 that binds strongly to the 16S ribosomal RNA.</text>
</comment>
<comment type="similarity">
    <text evidence="1">Belongs to the universal ribosomal protein uS19 family.</text>
</comment>
<evidence type="ECO:0000255" key="1">
    <source>
        <dbReference type="HAMAP-Rule" id="MF_00531"/>
    </source>
</evidence>
<evidence type="ECO:0000305" key="2"/>
<reference key="1">
    <citation type="journal article" date="2004" name="Nat. Biotechnol.">
        <title>The genome sequence of the capnophilic rumen bacterium Mannheimia succiniciproducens.</title>
        <authorList>
            <person name="Hong S.H."/>
            <person name="Kim J.S."/>
            <person name="Lee S.Y."/>
            <person name="In Y.H."/>
            <person name="Choi S.S."/>
            <person name="Rih J.-K."/>
            <person name="Kim C.H."/>
            <person name="Jeong H."/>
            <person name="Hur C.G."/>
            <person name="Kim J.J."/>
        </authorList>
    </citation>
    <scope>NUCLEOTIDE SEQUENCE [LARGE SCALE GENOMIC DNA]</scope>
    <source>
        <strain>KCTC 0769BP / MBEL55E</strain>
    </source>
</reference>